<gene>
    <name evidence="1" type="primary">rpsS</name>
    <name type="ordered locus">Nther_0198</name>
</gene>
<keyword id="KW-1185">Reference proteome</keyword>
<keyword id="KW-0687">Ribonucleoprotein</keyword>
<keyword id="KW-0689">Ribosomal protein</keyword>
<keyword id="KW-0694">RNA-binding</keyword>
<keyword id="KW-0699">rRNA-binding</keyword>
<feature type="chain" id="PRO_1000128009" description="Small ribosomal subunit protein uS19">
    <location>
        <begin position="1"/>
        <end position="94"/>
    </location>
</feature>
<name>RS19_NATTJ</name>
<accession>B2A4E3</accession>
<sequence>MPRSIKKGPFVDDHLLKKVKEMNKSNKKQVIKTWSRRSTILPDMIGHTIAVHDGRKHVPVFITEDMVGHKLGEFAPTRTFRGHGDHTERSTSLK</sequence>
<evidence type="ECO:0000255" key="1">
    <source>
        <dbReference type="HAMAP-Rule" id="MF_00531"/>
    </source>
</evidence>
<evidence type="ECO:0000305" key="2"/>
<reference key="1">
    <citation type="submission" date="2008-04" db="EMBL/GenBank/DDBJ databases">
        <title>Complete sequence of chromosome of Natranaerobius thermophilus JW/NM-WN-LF.</title>
        <authorList>
            <consortium name="US DOE Joint Genome Institute"/>
            <person name="Copeland A."/>
            <person name="Lucas S."/>
            <person name="Lapidus A."/>
            <person name="Glavina del Rio T."/>
            <person name="Dalin E."/>
            <person name="Tice H."/>
            <person name="Bruce D."/>
            <person name="Goodwin L."/>
            <person name="Pitluck S."/>
            <person name="Chertkov O."/>
            <person name="Brettin T."/>
            <person name="Detter J.C."/>
            <person name="Han C."/>
            <person name="Kuske C.R."/>
            <person name="Schmutz J."/>
            <person name="Larimer F."/>
            <person name="Land M."/>
            <person name="Hauser L."/>
            <person name="Kyrpides N."/>
            <person name="Lykidis A."/>
            <person name="Mesbah N.M."/>
            <person name="Wiegel J."/>
        </authorList>
    </citation>
    <scope>NUCLEOTIDE SEQUENCE [LARGE SCALE GENOMIC DNA]</scope>
    <source>
        <strain>ATCC BAA-1301 / DSM 18059 / JW/NM-WN-LF</strain>
    </source>
</reference>
<organism>
    <name type="scientific">Natranaerobius thermophilus (strain ATCC BAA-1301 / DSM 18059 / JW/NM-WN-LF)</name>
    <dbReference type="NCBI Taxonomy" id="457570"/>
    <lineage>
        <taxon>Bacteria</taxon>
        <taxon>Bacillati</taxon>
        <taxon>Bacillota</taxon>
        <taxon>Clostridia</taxon>
        <taxon>Natranaerobiales</taxon>
        <taxon>Natranaerobiaceae</taxon>
        <taxon>Natranaerobius</taxon>
    </lineage>
</organism>
<proteinExistence type="inferred from homology"/>
<comment type="function">
    <text evidence="1">Protein S19 forms a complex with S13 that binds strongly to the 16S ribosomal RNA.</text>
</comment>
<comment type="similarity">
    <text evidence="1">Belongs to the universal ribosomal protein uS19 family.</text>
</comment>
<protein>
    <recommendedName>
        <fullName evidence="1">Small ribosomal subunit protein uS19</fullName>
    </recommendedName>
    <alternativeName>
        <fullName evidence="2">30S ribosomal protein S19</fullName>
    </alternativeName>
</protein>
<dbReference type="EMBL" id="CP001034">
    <property type="protein sequence ID" value="ACB83797.1"/>
    <property type="molecule type" value="Genomic_DNA"/>
</dbReference>
<dbReference type="RefSeq" id="WP_012446686.1">
    <property type="nucleotide sequence ID" value="NC_010718.1"/>
</dbReference>
<dbReference type="SMR" id="B2A4E3"/>
<dbReference type="FunCoup" id="B2A4E3">
    <property type="interactions" value="397"/>
</dbReference>
<dbReference type="STRING" id="457570.Nther_0198"/>
<dbReference type="KEGG" id="nth:Nther_0198"/>
<dbReference type="eggNOG" id="COG0185">
    <property type="taxonomic scope" value="Bacteria"/>
</dbReference>
<dbReference type="HOGENOM" id="CLU_144911_0_1_9"/>
<dbReference type="InParanoid" id="B2A4E3"/>
<dbReference type="OrthoDB" id="9797833at2"/>
<dbReference type="Proteomes" id="UP000001683">
    <property type="component" value="Chromosome"/>
</dbReference>
<dbReference type="GO" id="GO:0005737">
    <property type="term" value="C:cytoplasm"/>
    <property type="evidence" value="ECO:0007669"/>
    <property type="project" value="UniProtKB-ARBA"/>
</dbReference>
<dbReference type="GO" id="GO:0015935">
    <property type="term" value="C:small ribosomal subunit"/>
    <property type="evidence" value="ECO:0007669"/>
    <property type="project" value="InterPro"/>
</dbReference>
<dbReference type="GO" id="GO:0019843">
    <property type="term" value="F:rRNA binding"/>
    <property type="evidence" value="ECO:0007669"/>
    <property type="project" value="UniProtKB-UniRule"/>
</dbReference>
<dbReference type="GO" id="GO:0003735">
    <property type="term" value="F:structural constituent of ribosome"/>
    <property type="evidence" value="ECO:0007669"/>
    <property type="project" value="InterPro"/>
</dbReference>
<dbReference type="GO" id="GO:0000028">
    <property type="term" value="P:ribosomal small subunit assembly"/>
    <property type="evidence" value="ECO:0007669"/>
    <property type="project" value="TreeGrafter"/>
</dbReference>
<dbReference type="GO" id="GO:0006412">
    <property type="term" value="P:translation"/>
    <property type="evidence" value="ECO:0007669"/>
    <property type="project" value="UniProtKB-UniRule"/>
</dbReference>
<dbReference type="FunFam" id="3.30.860.10:FF:000001">
    <property type="entry name" value="30S ribosomal protein S19"/>
    <property type="match status" value="1"/>
</dbReference>
<dbReference type="Gene3D" id="3.30.860.10">
    <property type="entry name" value="30s Ribosomal Protein S19, Chain A"/>
    <property type="match status" value="1"/>
</dbReference>
<dbReference type="HAMAP" id="MF_00531">
    <property type="entry name" value="Ribosomal_uS19"/>
    <property type="match status" value="1"/>
</dbReference>
<dbReference type="InterPro" id="IPR002222">
    <property type="entry name" value="Ribosomal_uS19"/>
</dbReference>
<dbReference type="InterPro" id="IPR005732">
    <property type="entry name" value="Ribosomal_uS19_bac-type"/>
</dbReference>
<dbReference type="InterPro" id="IPR020934">
    <property type="entry name" value="Ribosomal_uS19_CS"/>
</dbReference>
<dbReference type="InterPro" id="IPR023575">
    <property type="entry name" value="Ribosomal_uS19_SF"/>
</dbReference>
<dbReference type="NCBIfam" id="TIGR01050">
    <property type="entry name" value="rpsS_bact"/>
    <property type="match status" value="1"/>
</dbReference>
<dbReference type="PANTHER" id="PTHR11880">
    <property type="entry name" value="RIBOSOMAL PROTEIN S19P FAMILY MEMBER"/>
    <property type="match status" value="1"/>
</dbReference>
<dbReference type="PANTHER" id="PTHR11880:SF8">
    <property type="entry name" value="SMALL RIBOSOMAL SUBUNIT PROTEIN US19M"/>
    <property type="match status" value="1"/>
</dbReference>
<dbReference type="Pfam" id="PF00203">
    <property type="entry name" value="Ribosomal_S19"/>
    <property type="match status" value="1"/>
</dbReference>
<dbReference type="PIRSF" id="PIRSF002144">
    <property type="entry name" value="Ribosomal_S19"/>
    <property type="match status" value="1"/>
</dbReference>
<dbReference type="PRINTS" id="PR00975">
    <property type="entry name" value="RIBOSOMALS19"/>
</dbReference>
<dbReference type="SUPFAM" id="SSF54570">
    <property type="entry name" value="Ribosomal protein S19"/>
    <property type="match status" value="1"/>
</dbReference>
<dbReference type="PROSITE" id="PS00323">
    <property type="entry name" value="RIBOSOMAL_S19"/>
    <property type="match status" value="1"/>
</dbReference>